<comment type="similarity">
    <text evidence="1">Belongs to the UPF0250 family.</text>
</comment>
<proteinExistence type="inferred from homology"/>
<gene>
    <name type="ordered locus">Shewmr4_0986</name>
</gene>
<reference key="1">
    <citation type="submission" date="2006-08" db="EMBL/GenBank/DDBJ databases">
        <title>Complete sequence of Shewanella sp. MR-4.</title>
        <authorList>
            <consortium name="US DOE Joint Genome Institute"/>
            <person name="Copeland A."/>
            <person name="Lucas S."/>
            <person name="Lapidus A."/>
            <person name="Barry K."/>
            <person name="Detter J.C."/>
            <person name="Glavina del Rio T."/>
            <person name="Hammon N."/>
            <person name="Israni S."/>
            <person name="Dalin E."/>
            <person name="Tice H."/>
            <person name="Pitluck S."/>
            <person name="Kiss H."/>
            <person name="Brettin T."/>
            <person name="Bruce D."/>
            <person name="Han C."/>
            <person name="Tapia R."/>
            <person name="Gilna P."/>
            <person name="Schmutz J."/>
            <person name="Larimer F."/>
            <person name="Land M."/>
            <person name="Hauser L."/>
            <person name="Kyrpides N."/>
            <person name="Mikhailova N."/>
            <person name="Nealson K."/>
            <person name="Konstantinidis K."/>
            <person name="Klappenbach J."/>
            <person name="Tiedje J."/>
            <person name="Richardson P."/>
        </authorList>
    </citation>
    <scope>NUCLEOTIDE SEQUENCE [LARGE SCALE GENOMIC DNA]</scope>
    <source>
        <strain>MR-4</strain>
    </source>
</reference>
<dbReference type="EMBL" id="CP000446">
    <property type="protein sequence ID" value="ABI38066.1"/>
    <property type="molecule type" value="Genomic_DNA"/>
</dbReference>
<dbReference type="SMR" id="Q0HLK1"/>
<dbReference type="KEGG" id="she:Shewmr4_0986"/>
<dbReference type="HOGENOM" id="CLU_161438_2_1_6"/>
<dbReference type="GO" id="GO:0005829">
    <property type="term" value="C:cytosol"/>
    <property type="evidence" value="ECO:0007669"/>
    <property type="project" value="TreeGrafter"/>
</dbReference>
<dbReference type="Gene3D" id="3.30.70.260">
    <property type="match status" value="1"/>
</dbReference>
<dbReference type="HAMAP" id="MF_00659">
    <property type="entry name" value="UPF0250"/>
    <property type="match status" value="1"/>
</dbReference>
<dbReference type="InterPro" id="IPR007454">
    <property type="entry name" value="UPF0250_YbeD-like"/>
</dbReference>
<dbReference type="InterPro" id="IPR027471">
    <property type="entry name" value="YbeD-like_sf"/>
</dbReference>
<dbReference type="NCBIfam" id="NF003447">
    <property type="entry name" value="PRK04998.1"/>
    <property type="match status" value="1"/>
</dbReference>
<dbReference type="PANTHER" id="PTHR38036">
    <property type="entry name" value="UPF0250 PROTEIN YBED"/>
    <property type="match status" value="1"/>
</dbReference>
<dbReference type="PANTHER" id="PTHR38036:SF1">
    <property type="entry name" value="UPF0250 PROTEIN YBED"/>
    <property type="match status" value="1"/>
</dbReference>
<dbReference type="Pfam" id="PF04359">
    <property type="entry name" value="DUF493"/>
    <property type="match status" value="1"/>
</dbReference>
<dbReference type="SUPFAM" id="SSF117991">
    <property type="entry name" value="YbeD/HP0495-like"/>
    <property type="match status" value="1"/>
</dbReference>
<feature type="chain" id="PRO_1000061896" description="UPF0250 protein Shewmr4_0986">
    <location>
        <begin position="1"/>
        <end position="88"/>
    </location>
</feature>
<organism>
    <name type="scientific">Shewanella sp. (strain MR-4)</name>
    <dbReference type="NCBI Taxonomy" id="60480"/>
    <lineage>
        <taxon>Bacteria</taxon>
        <taxon>Pseudomonadati</taxon>
        <taxon>Pseudomonadota</taxon>
        <taxon>Gammaproteobacteria</taxon>
        <taxon>Alteromonadales</taxon>
        <taxon>Shewanellaceae</taxon>
        <taxon>Shewanella</taxon>
    </lineage>
</organism>
<name>Y986_SHESM</name>
<protein>
    <recommendedName>
        <fullName evidence="1">UPF0250 protein Shewmr4_0986</fullName>
    </recommendedName>
</protein>
<accession>Q0HLK1</accession>
<sequence>MLNTKFDELMEFPCAFPFKVVGDAHEALTDRVVAVVQRHAPGDYSPTVKASSKGSYYSVTIRVTVTSKDHIETLYTELAGIEGVRRVL</sequence>
<evidence type="ECO:0000255" key="1">
    <source>
        <dbReference type="HAMAP-Rule" id="MF_00659"/>
    </source>
</evidence>